<dbReference type="EMBL" id="U12980">
    <property type="protein sequence ID" value="AAC04969.1"/>
    <property type="molecule type" value="Genomic_DNA"/>
</dbReference>
<dbReference type="EMBL" id="AY558169">
    <property type="protein sequence ID" value="AAS56495.1"/>
    <property type="molecule type" value="Genomic_DNA"/>
</dbReference>
<dbReference type="PIR" id="S51957">
    <property type="entry name" value="S51957"/>
</dbReference>
<dbReference type="SMR" id="P39710"/>
<dbReference type="DIP" id="DIP-5148N"/>
<dbReference type="STRING" id="4932.YAL066W"/>
<dbReference type="PaxDb" id="4932-YAL066W"/>
<dbReference type="EnsemblFungi" id="YAL066W_mRNA">
    <property type="protein sequence ID" value="YAL066W"/>
    <property type="gene ID" value="YAL066W"/>
</dbReference>
<dbReference type="AGR" id="SGD:S000000061"/>
<dbReference type="SGD" id="S000000061">
    <property type="gene designation" value="YAL066W"/>
</dbReference>
<dbReference type="HOGENOM" id="CLU_2279670_0_0_1"/>
<accession>P39710</accession>
<gene>
    <name type="ordered locus">YAL066W</name>
</gene>
<name>YAG6_YEAST</name>
<comment type="caution">
    <text evidence="1">Product of a dubious gene prediction unlikely to encode a functional protein. Because of that it is not part of the S.cerevisiae S288c complete/reference proteome set.</text>
</comment>
<sequence>MLSLVKRSILHSIPITRHILPIQLILVKMNHVQIRNIKLYHFISYGFMLTKLTVFLFNLFFYRLRILCRLTLLILSLPVQIYIKEIQTKMLEKHTASDTSCI</sequence>
<protein>
    <recommendedName>
        <fullName>Putative uncharacterized protein YAL066W</fullName>
    </recommendedName>
</protein>
<evidence type="ECO:0000305" key="1">
    <source>
    </source>
</evidence>
<organism>
    <name type="scientific">Saccharomyces cerevisiae (strain ATCC 204508 / S288c)</name>
    <name type="common">Baker's yeast</name>
    <dbReference type="NCBI Taxonomy" id="559292"/>
    <lineage>
        <taxon>Eukaryota</taxon>
        <taxon>Fungi</taxon>
        <taxon>Dikarya</taxon>
        <taxon>Ascomycota</taxon>
        <taxon>Saccharomycotina</taxon>
        <taxon>Saccharomycetes</taxon>
        <taxon>Saccharomycetales</taxon>
        <taxon>Saccharomycetaceae</taxon>
        <taxon>Saccharomyces</taxon>
    </lineage>
</organism>
<reference key="1">
    <citation type="journal article" date="1995" name="Proc. Natl. Acad. Sci. U.S.A.">
        <title>The nucleotide sequence of chromosome I from Saccharomyces cerevisiae.</title>
        <authorList>
            <person name="Bussey H."/>
            <person name="Kaback D.B."/>
            <person name="Zhong W.-W."/>
            <person name="Vo D.H."/>
            <person name="Clark M.W."/>
            <person name="Fortin N."/>
            <person name="Hall J."/>
            <person name="Ouellette B.F.F."/>
            <person name="Keng T."/>
            <person name="Barton A.B."/>
            <person name="Su Y."/>
            <person name="Davies C.J."/>
            <person name="Storms R.K."/>
        </authorList>
    </citation>
    <scope>NUCLEOTIDE SEQUENCE [LARGE SCALE GENOMIC DNA]</scope>
    <source>
        <strain>ATCC 204508 / S288c</strain>
    </source>
</reference>
<reference key="2">
    <citation type="journal article" date="2014" name="G3 (Bethesda)">
        <title>The reference genome sequence of Saccharomyces cerevisiae: Then and now.</title>
        <authorList>
            <person name="Engel S.R."/>
            <person name="Dietrich F.S."/>
            <person name="Fisk D.G."/>
            <person name="Binkley G."/>
            <person name="Balakrishnan R."/>
            <person name="Costanzo M.C."/>
            <person name="Dwight S.S."/>
            <person name="Hitz B.C."/>
            <person name="Karra K."/>
            <person name="Nash R.S."/>
            <person name="Weng S."/>
            <person name="Wong E.D."/>
            <person name="Lloyd P."/>
            <person name="Skrzypek M.S."/>
            <person name="Miyasato S.R."/>
            <person name="Simison M."/>
            <person name="Cherry J.M."/>
        </authorList>
    </citation>
    <scope>GENOME REANNOTATION</scope>
    <source>
        <strain>ATCC 204508 / S288c</strain>
    </source>
</reference>
<reference key="3">
    <citation type="journal article" date="2007" name="Genome Res.">
        <title>Approaching a complete repository of sequence-verified protein-encoding clones for Saccharomyces cerevisiae.</title>
        <authorList>
            <person name="Hu Y."/>
            <person name="Rolfs A."/>
            <person name="Bhullar B."/>
            <person name="Murthy T.V.S."/>
            <person name="Zhu C."/>
            <person name="Berger M.F."/>
            <person name="Camargo A.A."/>
            <person name="Kelley F."/>
            <person name="McCarron S."/>
            <person name="Jepson D."/>
            <person name="Richardson A."/>
            <person name="Raphael J."/>
            <person name="Moreira D."/>
            <person name="Taycher E."/>
            <person name="Zuo D."/>
            <person name="Mohr S."/>
            <person name="Kane M.F."/>
            <person name="Williamson J."/>
            <person name="Simpson A.J.G."/>
            <person name="Bulyk M.L."/>
            <person name="Harlow E."/>
            <person name="Marsischky G."/>
            <person name="Kolodner R.D."/>
            <person name="LaBaer J."/>
        </authorList>
    </citation>
    <scope>NUCLEOTIDE SEQUENCE [GENOMIC DNA]</scope>
    <source>
        <strain>ATCC 204508 / S288c</strain>
    </source>
</reference>
<feature type="chain" id="PRO_0000202426" description="Putative uncharacterized protein YAL066W">
    <location>
        <begin position="1"/>
        <end position="102"/>
    </location>
</feature>
<proteinExistence type="uncertain"/>